<sequence length="396" mass="42538">MTTNTVSRKVAWLRVVTLAVAAFIFNTTEFVPVGLLSDIAQSFHMQTAQVGIMLTIYAWVVALMSLPFMLMTSQVERRKLLICLFVVFIASHVLSFLSWSFTVLVISRIGVAFAHAIFWSITASLAIRMAPAGKRAQALSLIATGTALAMVLGLPLGRIVGQYFGWRMTFFAIGIGALITLLCLIKLLPLLPSEHSGSLKSLPLLFRRPALMSIYLLTVVVVTAHYTAYSYIEPFVQNIAGFSANFATALLLLLGGAGIIGSVIFGKLGNQYASALVSTAIALLLVCLALLLPAANSEIHLGVLSIFWGIAMMLIGLGMQVKVLALAPDATDVAMALFSGIFNIGIGAGALVGNQVSLHWSMSMIGYVGAVPAFAALIWSIIIFRRWPVTLEEQTQ</sequence>
<reference key="1">
    <citation type="submission" date="2008-05" db="EMBL/GenBank/DDBJ databases">
        <title>Complete sequence of Shigella boydii serotype 18 strain BS512.</title>
        <authorList>
            <person name="Rasko D.A."/>
            <person name="Rosovitz M."/>
            <person name="Maurelli A.T."/>
            <person name="Myers G."/>
            <person name="Seshadri R."/>
            <person name="Cer R."/>
            <person name="Jiang L."/>
            <person name="Ravel J."/>
            <person name="Sebastian Y."/>
        </authorList>
    </citation>
    <scope>NUCLEOTIDE SEQUENCE [LARGE SCALE GENOMIC DNA]</scope>
    <source>
        <strain>CDC 3083-94 / BS512</strain>
    </source>
</reference>
<keyword id="KW-0997">Cell inner membrane</keyword>
<keyword id="KW-1003">Cell membrane</keyword>
<keyword id="KW-0472">Membrane</keyword>
<keyword id="KW-1185">Reference proteome</keyword>
<keyword id="KW-0762">Sugar transport</keyword>
<keyword id="KW-0812">Transmembrane</keyword>
<keyword id="KW-1133">Transmembrane helix</keyword>
<keyword id="KW-0813">Transport</keyword>
<organism>
    <name type="scientific">Shigella boydii serotype 18 (strain CDC 3083-94 / BS512)</name>
    <dbReference type="NCBI Taxonomy" id="344609"/>
    <lineage>
        <taxon>Bacteria</taxon>
        <taxon>Pseudomonadati</taxon>
        <taxon>Pseudomonadota</taxon>
        <taxon>Gammaproteobacteria</taxon>
        <taxon>Enterobacterales</taxon>
        <taxon>Enterobacteriaceae</taxon>
        <taxon>Shigella</taxon>
    </lineage>
</organism>
<comment type="function">
    <text evidence="1">Involved in the efflux of sugars. The physiological role may be the reduction of the intracellular concentration of toxic sugars or sugar metabolites.</text>
</comment>
<comment type="subcellular location">
    <subcellularLocation>
        <location evidence="1">Cell inner membrane</location>
        <topology evidence="1">Multi-pass membrane protein</topology>
    </subcellularLocation>
</comment>
<comment type="similarity">
    <text evidence="1">Belongs to the major facilitator superfamily. SotB (TC 2.A.1.2) family.</text>
</comment>
<protein>
    <recommendedName>
        <fullName evidence="1">Probable sugar efflux transporter</fullName>
    </recommendedName>
</protein>
<dbReference type="EMBL" id="CP001063">
    <property type="protein sequence ID" value="ACD08435.1"/>
    <property type="molecule type" value="Genomic_DNA"/>
</dbReference>
<dbReference type="RefSeq" id="WP_000210802.1">
    <property type="nucleotide sequence ID" value="NC_010658.1"/>
</dbReference>
<dbReference type="SMR" id="B2U167"/>
<dbReference type="KEGG" id="sbc:SbBS512_E1677"/>
<dbReference type="HOGENOM" id="CLU_001265_61_1_6"/>
<dbReference type="Proteomes" id="UP000001030">
    <property type="component" value="Chromosome"/>
</dbReference>
<dbReference type="GO" id="GO:0005886">
    <property type="term" value="C:plasma membrane"/>
    <property type="evidence" value="ECO:0007669"/>
    <property type="project" value="UniProtKB-SubCell"/>
</dbReference>
<dbReference type="GO" id="GO:0015144">
    <property type="term" value="F:carbohydrate transmembrane transporter activity"/>
    <property type="evidence" value="ECO:0007669"/>
    <property type="project" value="UniProtKB-UniRule"/>
</dbReference>
<dbReference type="CDD" id="cd17324">
    <property type="entry name" value="MFS_NepI_like"/>
    <property type="match status" value="1"/>
</dbReference>
<dbReference type="FunFam" id="1.20.1250.20:FF:000079">
    <property type="entry name" value="Probable sugar efflux transporter"/>
    <property type="match status" value="1"/>
</dbReference>
<dbReference type="Gene3D" id="1.20.1250.20">
    <property type="entry name" value="MFS general substrate transporter like domains"/>
    <property type="match status" value="1"/>
</dbReference>
<dbReference type="HAMAP" id="MF_00517">
    <property type="entry name" value="MFS_SotB"/>
    <property type="match status" value="1"/>
</dbReference>
<dbReference type="InterPro" id="IPR011701">
    <property type="entry name" value="MFS"/>
</dbReference>
<dbReference type="InterPro" id="IPR020846">
    <property type="entry name" value="MFS_dom"/>
</dbReference>
<dbReference type="InterPro" id="IPR050189">
    <property type="entry name" value="MFS_Efflux_Transporters"/>
</dbReference>
<dbReference type="InterPro" id="IPR036259">
    <property type="entry name" value="MFS_trans_sf"/>
</dbReference>
<dbReference type="InterPro" id="IPR023495">
    <property type="entry name" value="Sugar_effux_transptr_put"/>
</dbReference>
<dbReference type="NCBIfam" id="NF002921">
    <property type="entry name" value="PRK03545.1"/>
    <property type="match status" value="1"/>
</dbReference>
<dbReference type="PANTHER" id="PTHR43124">
    <property type="entry name" value="PURINE EFFLUX PUMP PBUE"/>
    <property type="match status" value="1"/>
</dbReference>
<dbReference type="PANTHER" id="PTHR43124:SF4">
    <property type="entry name" value="SUGAR EFFLUX TRANSPORTER"/>
    <property type="match status" value="1"/>
</dbReference>
<dbReference type="Pfam" id="PF07690">
    <property type="entry name" value="MFS_1"/>
    <property type="match status" value="1"/>
</dbReference>
<dbReference type="SUPFAM" id="SSF103473">
    <property type="entry name" value="MFS general substrate transporter"/>
    <property type="match status" value="1"/>
</dbReference>
<dbReference type="PROSITE" id="PS50850">
    <property type="entry name" value="MFS"/>
    <property type="match status" value="1"/>
</dbReference>
<evidence type="ECO:0000255" key="1">
    <source>
        <dbReference type="HAMAP-Rule" id="MF_00517"/>
    </source>
</evidence>
<name>SOTB_SHIB3</name>
<gene>
    <name evidence="1" type="primary">sotB</name>
    <name type="ordered locus">SbBS512_E1677</name>
</gene>
<proteinExistence type="inferred from homology"/>
<accession>B2U167</accession>
<feature type="chain" id="PRO_1000127477" description="Probable sugar efflux transporter">
    <location>
        <begin position="1"/>
        <end position="396"/>
    </location>
</feature>
<feature type="transmembrane region" description="Helical" evidence="1">
    <location>
        <begin position="15"/>
        <end position="35"/>
    </location>
</feature>
<feature type="transmembrane region" description="Helical" evidence="1">
    <location>
        <begin position="50"/>
        <end position="70"/>
    </location>
</feature>
<feature type="transmembrane region" description="Helical" evidence="1">
    <location>
        <begin position="81"/>
        <end position="101"/>
    </location>
</feature>
<feature type="transmembrane region" description="Helical" evidence="1">
    <location>
        <begin position="103"/>
        <end position="123"/>
    </location>
</feature>
<feature type="transmembrane region" description="Helical" evidence="1">
    <location>
        <begin position="136"/>
        <end position="156"/>
    </location>
</feature>
<feature type="transmembrane region" description="Helical" evidence="1">
    <location>
        <begin position="170"/>
        <end position="190"/>
    </location>
</feature>
<feature type="transmembrane region" description="Helical" evidence="1">
    <location>
        <begin position="209"/>
        <end position="229"/>
    </location>
</feature>
<feature type="transmembrane region" description="Helical" evidence="1">
    <location>
        <begin position="246"/>
        <end position="266"/>
    </location>
</feature>
<feature type="transmembrane region" description="Helical" evidence="1">
    <location>
        <begin position="275"/>
        <end position="295"/>
    </location>
</feature>
<feature type="transmembrane region" description="Helical" evidence="1">
    <location>
        <begin position="299"/>
        <end position="319"/>
    </location>
</feature>
<feature type="transmembrane region" description="Helical" evidence="1">
    <location>
        <begin position="333"/>
        <end position="353"/>
    </location>
</feature>
<feature type="transmembrane region" description="Helical" evidence="1">
    <location>
        <begin position="364"/>
        <end position="384"/>
    </location>
</feature>